<reference key="1">
    <citation type="journal article" date="2001" name="Proc. Natl. Acad. Sci. U.S.A.">
        <title>Genome sequence of an industrial microorganism Streptomyces avermitilis: deducing the ability of producing secondary metabolites.</title>
        <authorList>
            <person name="Omura S."/>
            <person name="Ikeda H."/>
            <person name="Ishikawa J."/>
            <person name="Hanamoto A."/>
            <person name="Takahashi C."/>
            <person name="Shinose M."/>
            <person name="Takahashi Y."/>
            <person name="Horikawa H."/>
            <person name="Nakazawa H."/>
            <person name="Osonoe T."/>
            <person name="Kikuchi H."/>
            <person name="Shiba T."/>
            <person name="Sakaki Y."/>
            <person name="Hattori M."/>
        </authorList>
    </citation>
    <scope>NUCLEOTIDE SEQUENCE [LARGE SCALE GENOMIC DNA]</scope>
    <source>
        <strain>ATCC 31267 / DSM 46492 / JCM 5070 / NBRC 14893 / NCIMB 12804 / NRRL 8165 / MA-4680</strain>
    </source>
</reference>
<reference key="2">
    <citation type="journal article" date="2003" name="Nat. Biotechnol.">
        <title>Complete genome sequence and comparative analysis of the industrial microorganism Streptomyces avermitilis.</title>
        <authorList>
            <person name="Ikeda H."/>
            <person name="Ishikawa J."/>
            <person name="Hanamoto A."/>
            <person name="Shinose M."/>
            <person name="Kikuchi H."/>
            <person name="Shiba T."/>
            <person name="Sakaki Y."/>
            <person name="Hattori M."/>
            <person name="Omura S."/>
        </authorList>
    </citation>
    <scope>NUCLEOTIDE SEQUENCE [LARGE SCALE GENOMIC DNA]</scope>
    <source>
        <strain>ATCC 31267 / DSM 46492 / JCM 5070 / NBRC 14893 / NCIMB 12804 / NRRL 8165 / MA-4680</strain>
    </source>
</reference>
<proteinExistence type="inferred from homology"/>
<sequence>MASESDRTVPDTRSASRPLADRVEELLATGGPLPIVAAGDPVLRRGAEPYDGQLGPGLLARFVEALRLTMHAAPGVGLAAPQVGVGLRIAVIEDPAPVPEEVGAVRGRVPQPFRVLVNPSYEAVGSDRAAFFEGCLSVPGWQAVVARPARVRLTALDEHGRAVDEEFTGWPARIVQHETDHLDGMLYLDRAELRSLSSNEAMALRWSQPTPERAAAALGFALPD</sequence>
<gene>
    <name evidence="1" type="primary">def3</name>
    <name type="ordered locus">SAV_7349</name>
</gene>
<keyword id="KW-0378">Hydrolase</keyword>
<keyword id="KW-0408">Iron</keyword>
<keyword id="KW-0479">Metal-binding</keyword>
<keyword id="KW-0648">Protein biosynthesis</keyword>
<keyword id="KW-1185">Reference proteome</keyword>
<name>DEF3_STRAW</name>
<dbReference type="EC" id="3.5.1.88" evidence="1"/>
<dbReference type="EMBL" id="BA000030">
    <property type="protein sequence ID" value="BAC75060.1"/>
    <property type="molecule type" value="Genomic_DNA"/>
</dbReference>
<dbReference type="RefSeq" id="WP_010988744.1">
    <property type="nucleotide sequence ID" value="NZ_JZJK01000085.1"/>
</dbReference>
<dbReference type="SMR" id="Q825U9"/>
<dbReference type="GeneID" id="41544420"/>
<dbReference type="KEGG" id="sma:SAVERM_7349"/>
<dbReference type="eggNOG" id="COG0242">
    <property type="taxonomic scope" value="Bacteria"/>
</dbReference>
<dbReference type="HOGENOM" id="CLU_061901_5_2_11"/>
<dbReference type="OrthoDB" id="9804313at2"/>
<dbReference type="Proteomes" id="UP000000428">
    <property type="component" value="Chromosome"/>
</dbReference>
<dbReference type="GO" id="GO:0046872">
    <property type="term" value="F:metal ion binding"/>
    <property type="evidence" value="ECO:0007669"/>
    <property type="project" value="UniProtKB-KW"/>
</dbReference>
<dbReference type="GO" id="GO:0042586">
    <property type="term" value="F:peptide deformylase activity"/>
    <property type="evidence" value="ECO:0007669"/>
    <property type="project" value="UniProtKB-UniRule"/>
</dbReference>
<dbReference type="GO" id="GO:0043686">
    <property type="term" value="P:co-translational protein modification"/>
    <property type="evidence" value="ECO:0007669"/>
    <property type="project" value="TreeGrafter"/>
</dbReference>
<dbReference type="GO" id="GO:0006412">
    <property type="term" value="P:translation"/>
    <property type="evidence" value="ECO:0007669"/>
    <property type="project" value="UniProtKB-UniRule"/>
</dbReference>
<dbReference type="CDD" id="cd00487">
    <property type="entry name" value="Pep_deformylase"/>
    <property type="match status" value="1"/>
</dbReference>
<dbReference type="FunFam" id="3.90.45.10:FF:000003">
    <property type="entry name" value="Peptide deformylase"/>
    <property type="match status" value="1"/>
</dbReference>
<dbReference type="Gene3D" id="3.90.45.10">
    <property type="entry name" value="Peptide deformylase"/>
    <property type="match status" value="1"/>
</dbReference>
<dbReference type="HAMAP" id="MF_00163">
    <property type="entry name" value="Pep_deformylase"/>
    <property type="match status" value="1"/>
</dbReference>
<dbReference type="InterPro" id="IPR023635">
    <property type="entry name" value="Peptide_deformylase"/>
</dbReference>
<dbReference type="InterPro" id="IPR036821">
    <property type="entry name" value="Peptide_deformylase_sf"/>
</dbReference>
<dbReference type="NCBIfam" id="NF001159">
    <property type="entry name" value="PRK00150.1-3"/>
    <property type="match status" value="1"/>
</dbReference>
<dbReference type="PANTHER" id="PTHR10458">
    <property type="entry name" value="PEPTIDE DEFORMYLASE"/>
    <property type="match status" value="1"/>
</dbReference>
<dbReference type="PANTHER" id="PTHR10458:SF2">
    <property type="entry name" value="PEPTIDE DEFORMYLASE, MITOCHONDRIAL"/>
    <property type="match status" value="1"/>
</dbReference>
<dbReference type="Pfam" id="PF01327">
    <property type="entry name" value="Pep_deformylase"/>
    <property type="match status" value="1"/>
</dbReference>
<dbReference type="PIRSF" id="PIRSF004749">
    <property type="entry name" value="Pep_def"/>
    <property type="match status" value="1"/>
</dbReference>
<dbReference type="PRINTS" id="PR01576">
    <property type="entry name" value="PDEFORMYLASE"/>
</dbReference>
<dbReference type="SUPFAM" id="SSF56420">
    <property type="entry name" value="Peptide deformylase"/>
    <property type="match status" value="1"/>
</dbReference>
<protein>
    <recommendedName>
        <fullName evidence="1">Peptide deformylase 3</fullName>
        <shortName evidence="1">PDF 3</shortName>
        <ecNumber evidence="1">3.5.1.88</ecNumber>
    </recommendedName>
    <alternativeName>
        <fullName evidence="1">Polypeptide deformylase 3</fullName>
    </alternativeName>
</protein>
<accession>Q825U9</accession>
<evidence type="ECO:0000255" key="1">
    <source>
        <dbReference type="HAMAP-Rule" id="MF_00163"/>
    </source>
</evidence>
<feature type="chain" id="PRO_0000082851" description="Peptide deformylase 3">
    <location>
        <begin position="1"/>
        <end position="224"/>
    </location>
</feature>
<feature type="active site" evidence="1">
    <location>
        <position position="178"/>
    </location>
</feature>
<feature type="binding site" evidence="1">
    <location>
        <position position="135"/>
    </location>
    <ligand>
        <name>Fe cation</name>
        <dbReference type="ChEBI" id="CHEBI:24875"/>
    </ligand>
</feature>
<feature type="binding site" evidence="1">
    <location>
        <position position="177"/>
    </location>
    <ligand>
        <name>Fe cation</name>
        <dbReference type="ChEBI" id="CHEBI:24875"/>
    </ligand>
</feature>
<feature type="binding site" evidence="1">
    <location>
        <position position="181"/>
    </location>
    <ligand>
        <name>Fe cation</name>
        <dbReference type="ChEBI" id="CHEBI:24875"/>
    </ligand>
</feature>
<comment type="function">
    <text evidence="1">Removes the formyl group from the N-terminal Met of newly synthesized proteins. Requires at least a dipeptide for an efficient rate of reaction. N-terminal L-methionine is a prerequisite for activity but the enzyme has broad specificity at other positions.</text>
</comment>
<comment type="catalytic activity">
    <reaction evidence="1">
        <text>N-terminal N-formyl-L-methionyl-[peptide] + H2O = N-terminal L-methionyl-[peptide] + formate</text>
        <dbReference type="Rhea" id="RHEA:24420"/>
        <dbReference type="Rhea" id="RHEA-COMP:10639"/>
        <dbReference type="Rhea" id="RHEA-COMP:10640"/>
        <dbReference type="ChEBI" id="CHEBI:15377"/>
        <dbReference type="ChEBI" id="CHEBI:15740"/>
        <dbReference type="ChEBI" id="CHEBI:49298"/>
        <dbReference type="ChEBI" id="CHEBI:64731"/>
        <dbReference type="EC" id="3.5.1.88"/>
    </reaction>
</comment>
<comment type="cofactor">
    <cofactor evidence="1">
        <name>Fe(2+)</name>
        <dbReference type="ChEBI" id="CHEBI:29033"/>
    </cofactor>
    <text evidence="1">Binds 1 Fe(2+) ion.</text>
</comment>
<comment type="similarity">
    <text evidence="1">Belongs to the polypeptide deformylase family.</text>
</comment>
<organism>
    <name type="scientific">Streptomyces avermitilis (strain ATCC 31267 / DSM 46492 / JCM 5070 / NBRC 14893 / NCIMB 12804 / NRRL 8165 / MA-4680)</name>
    <dbReference type="NCBI Taxonomy" id="227882"/>
    <lineage>
        <taxon>Bacteria</taxon>
        <taxon>Bacillati</taxon>
        <taxon>Actinomycetota</taxon>
        <taxon>Actinomycetes</taxon>
        <taxon>Kitasatosporales</taxon>
        <taxon>Streptomycetaceae</taxon>
        <taxon>Streptomyces</taxon>
    </lineage>
</organism>